<name>MSRA_STRU0</name>
<reference key="1">
    <citation type="journal article" date="2009" name="BMC Genomics">
        <title>Evidence for niche adaptation in the genome of the bovine pathogen Streptococcus uberis.</title>
        <authorList>
            <person name="Ward P.N."/>
            <person name="Holden M.T.G."/>
            <person name="Leigh J.A."/>
            <person name="Lennard N."/>
            <person name="Bignell A."/>
            <person name="Barron A."/>
            <person name="Clark L."/>
            <person name="Quail M.A."/>
            <person name="Woodward J."/>
            <person name="Barrell B.G."/>
            <person name="Egan S.A."/>
            <person name="Field T.R."/>
            <person name="Maskell D."/>
            <person name="Kehoe M."/>
            <person name="Dowson C.G."/>
            <person name="Chanter N."/>
            <person name="Whatmore A.M."/>
            <person name="Bentley S.D."/>
            <person name="Parkhill J."/>
        </authorList>
    </citation>
    <scope>NUCLEOTIDE SEQUENCE [LARGE SCALE GENOMIC DNA]</scope>
    <source>
        <strain>ATCC BAA-854 / 0140J</strain>
    </source>
</reference>
<organism>
    <name type="scientific">Streptococcus uberis (strain ATCC BAA-854 / 0140J)</name>
    <dbReference type="NCBI Taxonomy" id="218495"/>
    <lineage>
        <taxon>Bacteria</taxon>
        <taxon>Bacillati</taxon>
        <taxon>Bacillota</taxon>
        <taxon>Bacilli</taxon>
        <taxon>Lactobacillales</taxon>
        <taxon>Streptococcaceae</taxon>
        <taxon>Streptococcus</taxon>
    </lineage>
</organism>
<sequence>MERAIFAGGCFWCMVQPFEELDGIVSVRSGYTGGHVPNPSYEQVCSKTTGHTEAVEIIFDPQKIDYSDLVELYWQQTDPTDAFGQFEDRGDNYRPVIFYFDERQKEIAEQSRENLQLSGRFQDPIVTQIEEAQPFYLAEDYHQAFYRKNPERYAQSSKQRHDFLEENWH</sequence>
<feature type="chain" id="PRO_1000184572" description="Peptide methionine sulfoxide reductase MsrA">
    <location>
        <begin position="1"/>
        <end position="169"/>
    </location>
</feature>
<feature type="active site" evidence="1">
    <location>
        <position position="10"/>
    </location>
</feature>
<evidence type="ECO:0000255" key="1">
    <source>
        <dbReference type="HAMAP-Rule" id="MF_01401"/>
    </source>
</evidence>
<gene>
    <name evidence="1" type="primary">msrA</name>
    <name type="ordered locus">SUB0486</name>
</gene>
<dbReference type="EC" id="1.8.4.11" evidence="1"/>
<dbReference type="EMBL" id="AM946015">
    <property type="protein sequence ID" value="CAR41200.1"/>
    <property type="molecule type" value="Genomic_DNA"/>
</dbReference>
<dbReference type="RefSeq" id="WP_012658018.1">
    <property type="nucleotide sequence ID" value="NC_012004.1"/>
</dbReference>
<dbReference type="SMR" id="B9DRF3"/>
<dbReference type="STRING" id="218495.SUB0486"/>
<dbReference type="GeneID" id="93825785"/>
<dbReference type="KEGG" id="sub:SUB0486"/>
<dbReference type="eggNOG" id="COG0225">
    <property type="taxonomic scope" value="Bacteria"/>
</dbReference>
<dbReference type="HOGENOM" id="CLU_031040_10_0_9"/>
<dbReference type="OrthoDB" id="4174719at2"/>
<dbReference type="Proteomes" id="UP000000449">
    <property type="component" value="Chromosome"/>
</dbReference>
<dbReference type="GO" id="GO:0033744">
    <property type="term" value="F:L-methionine:thioredoxin-disulfide S-oxidoreductase activity"/>
    <property type="evidence" value="ECO:0007669"/>
    <property type="project" value="RHEA"/>
</dbReference>
<dbReference type="GO" id="GO:0008113">
    <property type="term" value="F:peptide-methionine (S)-S-oxide reductase activity"/>
    <property type="evidence" value="ECO:0007669"/>
    <property type="project" value="UniProtKB-UniRule"/>
</dbReference>
<dbReference type="GO" id="GO:0036211">
    <property type="term" value="P:protein modification process"/>
    <property type="evidence" value="ECO:0007669"/>
    <property type="project" value="UniProtKB-UniRule"/>
</dbReference>
<dbReference type="Gene3D" id="3.30.1060.10">
    <property type="entry name" value="Peptide methionine sulphoxide reductase MsrA"/>
    <property type="match status" value="1"/>
</dbReference>
<dbReference type="HAMAP" id="MF_01401">
    <property type="entry name" value="MsrA"/>
    <property type="match status" value="1"/>
</dbReference>
<dbReference type="InterPro" id="IPR002569">
    <property type="entry name" value="Met_Sox_Rdtase_MsrA_dom"/>
</dbReference>
<dbReference type="InterPro" id="IPR036509">
    <property type="entry name" value="Met_Sox_Rdtase_MsrA_sf"/>
</dbReference>
<dbReference type="NCBIfam" id="TIGR00401">
    <property type="entry name" value="msrA"/>
    <property type="match status" value="1"/>
</dbReference>
<dbReference type="PANTHER" id="PTHR43774">
    <property type="entry name" value="PEPTIDE METHIONINE SULFOXIDE REDUCTASE"/>
    <property type="match status" value="1"/>
</dbReference>
<dbReference type="PANTHER" id="PTHR43774:SF1">
    <property type="entry name" value="PEPTIDE METHIONINE SULFOXIDE REDUCTASE MSRA 2"/>
    <property type="match status" value="1"/>
</dbReference>
<dbReference type="Pfam" id="PF01625">
    <property type="entry name" value="PMSR"/>
    <property type="match status" value="1"/>
</dbReference>
<dbReference type="SUPFAM" id="SSF55068">
    <property type="entry name" value="Peptide methionine sulfoxide reductase"/>
    <property type="match status" value="1"/>
</dbReference>
<comment type="function">
    <text evidence="1">Has an important function as a repair enzyme for proteins that have been inactivated by oxidation. Catalyzes the reversible oxidation-reduction of methionine sulfoxide in proteins to methionine.</text>
</comment>
<comment type="catalytic activity">
    <reaction evidence="1">
        <text>L-methionyl-[protein] + [thioredoxin]-disulfide + H2O = L-methionyl-(S)-S-oxide-[protein] + [thioredoxin]-dithiol</text>
        <dbReference type="Rhea" id="RHEA:14217"/>
        <dbReference type="Rhea" id="RHEA-COMP:10698"/>
        <dbReference type="Rhea" id="RHEA-COMP:10700"/>
        <dbReference type="Rhea" id="RHEA-COMP:12313"/>
        <dbReference type="Rhea" id="RHEA-COMP:12315"/>
        <dbReference type="ChEBI" id="CHEBI:15377"/>
        <dbReference type="ChEBI" id="CHEBI:16044"/>
        <dbReference type="ChEBI" id="CHEBI:29950"/>
        <dbReference type="ChEBI" id="CHEBI:44120"/>
        <dbReference type="ChEBI" id="CHEBI:50058"/>
        <dbReference type="EC" id="1.8.4.11"/>
    </reaction>
</comment>
<comment type="catalytic activity">
    <reaction evidence="1">
        <text>[thioredoxin]-disulfide + L-methionine + H2O = L-methionine (S)-S-oxide + [thioredoxin]-dithiol</text>
        <dbReference type="Rhea" id="RHEA:19993"/>
        <dbReference type="Rhea" id="RHEA-COMP:10698"/>
        <dbReference type="Rhea" id="RHEA-COMP:10700"/>
        <dbReference type="ChEBI" id="CHEBI:15377"/>
        <dbReference type="ChEBI" id="CHEBI:29950"/>
        <dbReference type="ChEBI" id="CHEBI:50058"/>
        <dbReference type="ChEBI" id="CHEBI:57844"/>
        <dbReference type="ChEBI" id="CHEBI:58772"/>
        <dbReference type="EC" id="1.8.4.11"/>
    </reaction>
</comment>
<comment type="similarity">
    <text evidence="1">Belongs to the MsrA Met sulfoxide reductase family.</text>
</comment>
<proteinExistence type="inferred from homology"/>
<accession>B9DRF3</accession>
<protein>
    <recommendedName>
        <fullName evidence="1">Peptide methionine sulfoxide reductase MsrA</fullName>
        <shortName evidence="1">Protein-methionine-S-oxide reductase</shortName>
        <ecNumber evidence="1">1.8.4.11</ecNumber>
    </recommendedName>
    <alternativeName>
        <fullName evidence="1">Peptide-methionine (S)-S-oxide reductase</fullName>
        <shortName evidence="1">Peptide Met(O) reductase</shortName>
    </alternativeName>
</protein>
<keyword id="KW-0560">Oxidoreductase</keyword>
<keyword id="KW-1185">Reference proteome</keyword>